<dbReference type="EC" id="2.1.1.-" evidence="3"/>
<dbReference type="EMBL" id="AB013389">
    <property type="protein sequence ID" value="BAB10912.1"/>
    <property type="molecule type" value="Genomic_DNA"/>
</dbReference>
<dbReference type="EMBL" id="AB022211">
    <property type="protein sequence ID" value="BAB10912.1"/>
    <property type="status" value="JOINED"/>
    <property type="molecule type" value="Genomic_DNA"/>
</dbReference>
<dbReference type="EMBL" id="CP002688">
    <property type="protein sequence ID" value="AED98203.1"/>
    <property type="molecule type" value="Genomic_DNA"/>
</dbReference>
<dbReference type="EMBL" id="CP002688">
    <property type="protein sequence ID" value="AED98204.1"/>
    <property type="molecule type" value="Genomic_DNA"/>
</dbReference>
<dbReference type="EMBL" id="AY120713">
    <property type="protein sequence ID" value="AAM53271.1"/>
    <property type="molecule type" value="mRNA"/>
</dbReference>
<dbReference type="EMBL" id="BT008836">
    <property type="protein sequence ID" value="AAP68275.1"/>
    <property type="molecule type" value="mRNA"/>
</dbReference>
<dbReference type="RefSeq" id="NP_201437.2">
    <molecule id="Q9FK02-2"/>
    <property type="nucleotide sequence ID" value="NM_126034.3"/>
</dbReference>
<dbReference type="RefSeq" id="NP_975003.1">
    <molecule id="Q9FK02-1"/>
    <property type="nucleotide sequence ID" value="NM_203274.2"/>
</dbReference>
<dbReference type="SMR" id="Q9FK02"/>
<dbReference type="FunCoup" id="Q9FK02">
    <property type="interactions" value="21"/>
</dbReference>
<dbReference type="STRING" id="3702.Q9FK02"/>
<dbReference type="PaxDb" id="3702-AT5G66360.2"/>
<dbReference type="ProteomicsDB" id="220541">
    <molecule id="Q9FK02-1"/>
</dbReference>
<dbReference type="EnsemblPlants" id="AT5G66360.1">
    <molecule id="Q9FK02-2"/>
    <property type="protein sequence ID" value="AT5G66360.1"/>
    <property type="gene ID" value="AT5G66360"/>
</dbReference>
<dbReference type="EnsemblPlants" id="AT5G66360.2">
    <molecule id="Q9FK02-1"/>
    <property type="protein sequence ID" value="AT5G66360.2"/>
    <property type="gene ID" value="AT5G66360"/>
</dbReference>
<dbReference type="GeneID" id="836768"/>
<dbReference type="Gramene" id="AT5G66360.1">
    <molecule id="Q9FK02-2"/>
    <property type="protein sequence ID" value="AT5G66360.1"/>
    <property type="gene ID" value="AT5G66360"/>
</dbReference>
<dbReference type="Gramene" id="AT5G66360.2">
    <molecule id="Q9FK02-1"/>
    <property type="protein sequence ID" value="AT5G66360.2"/>
    <property type="gene ID" value="AT5G66360"/>
</dbReference>
<dbReference type="KEGG" id="ath:AT5G66360"/>
<dbReference type="Araport" id="AT5G66360"/>
<dbReference type="TAIR" id="AT5G66360">
    <property type="gene designation" value="DIM1B"/>
</dbReference>
<dbReference type="eggNOG" id="KOG0820">
    <property type="taxonomic scope" value="Eukaryota"/>
</dbReference>
<dbReference type="HOGENOM" id="CLU_041220_2_0_1"/>
<dbReference type="InParanoid" id="Q9FK02"/>
<dbReference type="OMA" id="DACVANI"/>
<dbReference type="OrthoDB" id="74991at2759"/>
<dbReference type="PhylomeDB" id="Q9FK02"/>
<dbReference type="PRO" id="PR:Q9FK02"/>
<dbReference type="Proteomes" id="UP000006548">
    <property type="component" value="Chromosome 5"/>
</dbReference>
<dbReference type="ExpressionAtlas" id="Q9FK02">
    <property type="expression patterns" value="baseline and differential"/>
</dbReference>
<dbReference type="GO" id="GO:0005739">
    <property type="term" value="C:mitochondrion"/>
    <property type="evidence" value="ECO:0000314"/>
    <property type="project" value="TAIR"/>
</dbReference>
<dbReference type="GO" id="GO:0003723">
    <property type="term" value="F:RNA binding"/>
    <property type="evidence" value="ECO:0007669"/>
    <property type="project" value="UniProtKB-KW"/>
</dbReference>
<dbReference type="GO" id="GO:0000179">
    <property type="term" value="F:rRNA (adenine-N6,N6-)-dimethyltransferase activity"/>
    <property type="evidence" value="ECO:0007669"/>
    <property type="project" value="InterPro"/>
</dbReference>
<dbReference type="GO" id="GO:0046085">
    <property type="term" value="P:adenosine metabolic process"/>
    <property type="evidence" value="ECO:0000315"/>
    <property type="project" value="TAIR"/>
</dbReference>
<dbReference type="CDD" id="cd02440">
    <property type="entry name" value="AdoMet_MTases"/>
    <property type="match status" value="1"/>
</dbReference>
<dbReference type="FunFam" id="1.10.8.480:FF:000008">
    <property type="entry name" value="rRNA adenine N(6)-methyltransferase"/>
    <property type="match status" value="1"/>
</dbReference>
<dbReference type="FunFam" id="3.40.50.150:FF:000081">
    <property type="entry name" value="rRNA adenine N(6)-methyltransferase"/>
    <property type="match status" value="1"/>
</dbReference>
<dbReference type="Gene3D" id="1.10.8.480">
    <property type="match status" value="1"/>
</dbReference>
<dbReference type="Gene3D" id="3.40.50.150">
    <property type="entry name" value="Vaccinia Virus protein VP39"/>
    <property type="match status" value="1"/>
</dbReference>
<dbReference type="InterPro" id="IPR001737">
    <property type="entry name" value="KsgA/Erm"/>
</dbReference>
<dbReference type="InterPro" id="IPR020596">
    <property type="entry name" value="rRNA_Ade_Mease_Trfase_CS"/>
</dbReference>
<dbReference type="InterPro" id="IPR020598">
    <property type="entry name" value="rRNA_Ade_methylase_Trfase_N"/>
</dbReference>
<dbReference type="InterPro" id="IPR011530">
    <property type="entry name" value="rRNA_adenine_dimethylase"/>
</dbReference>
<dbReference type="InterPro" id="IPR029063">
    <property type="entry name" value="SAM-dependent_MTases_sf"/>
</dbReference>
<dbReference type="NCBIfam" id="TIGR00755">
    <property type="entry name" value="ksgA"/>
    <property type="match status" value="1"/>
</dbReference>
<dbReference type="PANTHER" id="PTHR11727">
    <property type="entry name" value="DIMETHYLADENOSINE TRANSFERASE"/>
    <property type="match status" value="1"/>
</dbReference>
<dbReference type="PANTHER" id="PTHR11727:SF12">
    <property type="entry name" value="RIBOSOMAL RNA SMALL SUBUNIT METHYLTRANSFERASE, MITOCHONDRIAL"/>
    <property type="match status" value="1"/>
</dbReference>
<dbReference type="Pfam" id="PF00398">
    <property type="entry name" value="RrnaAD"/>
    <property type="match status" value="1"/>
</dbReference>
<dbReference type="SMART" id="SM00650">
    <property type="entry name" value="rADc"/>
    <property type="match status" value="1"/>
</dbReference>
<dbReference type="SUPFAM" id="SSF53335">
    <property type="entry name" value="S-adenosyl-L-methionine-dependent methyltransferases"/>
    <property type="match status" value="1"/>
</dbReference>
<dbReference type="PROSITE" id="PS01131">
    <property type="entry name" value="RRNA_A_DIMETH"/>
    <property type="match status" value="1"/>
</dbReference>
<dbReference type="PROSITE" id="PS51689">
    <property type="entry name" value="SAM_RNA_A_N6_MT"/>
    <property type="match status" value="1"/>
</dbReference>
<accession>Q9FK02</accession>
<accession>Q8L867</accession>
<name>DIM1B_ARATH</name>
<evidence type="ECO:0000255" key="1"/>
<evidence type="ECO:0000255" key="2">
    <source>
        <dbReference type="PROSITE-ProRule" id="PRU01026"/>
    </source>
</evidence>
<evidence type="ECO:0000269" key="3">
    <source>
    </source>
</evidence>
<evidence type="ECO:0000303" key="4">
    <source>
    </source>
</evidence>
<evidence type="ECO:0000305" key="5"/>
<evidence type="ECO:0000312" key="6">
    <source>
        <dbReference type="Araport" id="AT5G66360"/>
    </source>
</evidence>
<evidence type="ECO:0000312" key="7">
    <source>
        <dbReference type="EMBL" id="BAB10912.1"/>
    </source>
</evidence>
<evidence type="ECO:0000312" key="8">
    <source>
        <dbReference type="Proteomes" id="UP000006548"/>
    </source>
</evidence>
<proteinExistence type="evidence at protein level"/>
<keyword id="KW-0025">Alternative splicing</keyword>
<keyword id="KW-0489">Methyltransferase</keyword>
<keyword id="KW-0496">Mitochondrion</keyword>
<keyword id="KW-1185">Reference proteome</keyword>
<keyword id="KW-0694">RNA-binding</keyword>
<keyword id="KW-0698">rRNA processing</keyword>
<keyword id="KW-0949">S-adenosyl-L-methionine</keyword>
<keyword id="KW-0808">Transferase</keyword>
<keyword id="KW-0809">Transit peptide</keyword>
<protein>
    <recommendedName>
        <fullName evidence="5">Ribosomal RNA small subunit methyltransferase, mitochondrial</fullName>
        <ecNumber evidence="3">2.1.1.-</ecNumber>
    </recommendedName>
    <alternativeName>
        <fullName evidence="5">18S mitochondrial rRNA (adenine(1914)-N(6)/adenine(1915)-N(6))-dimethyltransferase</fullName>
    </alternativeName>
    <alternativeName>
        <fullName evidence="5">Adenosine dimethyl transferase 1B</fullName>
    </alternativeName>
    <alternativeName>
        <fullName evidence="4">Dimethyladenosine transferase 1B</fullName>
    </alternativeName>
</protein>
<organism evidence="8">
    <name type="scientific">Arabidopsis thaliana</name>
    <name type="common">Mouse-ear cress</name>
    <dbReference type="NCBI Taxonomy" id="3702"/>
    <lineage>
        <taxon>Eukaryota</taxon>
        <taxon>Viridiplantae</taxon>
        <taxon>Streptophyta</taxon>
        <taxon>Embryophyta</taxon>
        <taxon>Tracheophyta</taxon>
        <taxon>Spermatophyta</taxon>
        <taxon>Magnoliopsida</taxon>
        <taxon>eudicotyledons</taxon>
        <taxon>Gunneridae</taxon>
        <taxon>Pentapetalae</taxon>
        <taxon>rosids</taxon>
        <taxon>malvids</taxon>
        <taxon>Brassicales</taxon>
        <taxon>Brassicaceae</taxon>
        <taxon>Camelineae</taxon>
        <taxon>Arabidopsis</taxon>
    </lineage>
</organism>
<sequence length="380" mass="43315">MILRLKDQTLIKINSTRSYLSSLVFRRDSHSQARTKPDHDRRRRGYERDVRIEEKKEHDGLFLCKSKGQHLLTNTRILDSIVRSSDIRPTDTVLEIGPGTGNLTMKLLEAAQNVVAVELDKRMVEILRKRVSDHGFADKLTIIQKDVLKTDFPHFDLVVANIPYNISSPLVAKLVYGSNTFRSATLLLQKEFSRRLLANPGDSDFNRLAVNVKLVADVKFVMDVSKREFVPPPKVDSSVIRITPKEIIPDVNVQEWLAFTRTCFGKKNKTLGSMFRQKKKVMELQSLSAGRHGSNVEVMNQTGGDSDSDVEEDGKDDLLCLDTDASMFKERVIEILRTNGFEEKRPSKLSHRELLHLLSLFNQAGIFFHDITSLQMDLHE</sequence>
<feature type="transit peptide" description="Mitochondrion" evidence="1">
    <location>
        <begin position="1"/>
        <end position="26"/>
    </location>
</feature>
<feature type="chain" id="PRO_0000433251" description="Ribosomal RNA small subunit methyltransferase, mitochondrial" evidence="1">
    <location>
        <begin position="27"/>
        <end position="380"/>
    </location>
</feature>
<feature type="binding site" evidence="2">
    <location>
        <position position="70"/>
    </location>
    <ligand>
        <name>S-adenosyl-L-methionine</name>
        <dbReference type="ChEBI" id="CHEBI:59789"/>
    </ligand>
</feature>
<feature type="binding site" evidence="2">
    <location>
        <position position="72"/>
    </location>
    <ligand>
        <name>S-adenosyl-L-methionine</name>
        <dbReference type="ChEBI" id="CHEBI:59789"/>
    </ligand>
</feature>
<feature type="binding site" evidence="2">
    <location>
        <position position="97"/>
    </location>
    <ligand>
        <name>S-adenosyl-L-methionine</name>
        <dbReference type="ChEBI" id="CHEBI:59789"/>
    </ligand>
</feature>
<feature type="binding site" evidence="2">
    <location>
        <position position="118"/>
    </location>
    <ligand>
        <name>S-adenosyl-L-methionine</name>
        <dbReference type="ChEBI" id="CHEBI:59789"/>
    </ligand>
</feature>
<feature type="binding site" evidence="2">
    <location>
        <position position="146"/>
    </location>
    <ligand>
        <name>S-adenosyl-L-methionine</name>
        <dbReference type="ChEBI" id="CHEBI:59789"/>
    </ligand>
</feature>
<feature type="binding site" evidence="2">
    <location>
        <position position="161"/>
    </location>
    <ligand>
        <name>S-adenosyl-L-methionine</name>
        <dbReference type="ChEBI" id="CHEBI:59789"/>
    </ligand>
</feature>
<feature type="splice variant" id="VSP_057696" description="In isoform 2.">
    <location>
        <begin position="214"/>
        <end position="241"/>
    </location>
</feature>
<reference key="1">
    <citation type="journal article" date="1998" name="DNA Res.">
        <title>Structural analysis of Arabidopsis thaliana chromosome 5. VI. Sequence features of the regions of 1,367,185 bp covered by 19 physically assigned P1 and TAC clones.</title>
        <authorList>
            <person name="Kotani H."/>
            <person name="Nakamura Y."/>
            <person name="Sato S."/>
            <person name="Asamizu E."/>
            <person name="Kaneko T."/>
            <person name="Miyajima N."/>
            <person name="Tabata S."/>
        </authorList>
    </citation>
    <scope>NUCLEOTIDE SEQUENCE [LARGE SCALE GENOMIC DNA]</scope>
    <source>
        <strain>cv. Columbia</strain>
    </source>
</reference>
<reference key="2">
    <citation type="journal article" date="2000" name="DNA Res.">
        <title>Structural analysis of Arabidopsis thaliana chromosome 5. X. Sequence features of the regions of 3,076,755 bp covered by sixty P1 and TAC clones.</title>
        <authorList>
            <person name="Sato S."/>
            <person name="Nakamura Y."/>
            <person name="Kaneko T."/>
            <person name="Katoh T."/>
            <person name="Asamizu E."/>
            <person name="Kotani H."/>
            <person name="Tabata S."/>
        </authorList>
    </citation>
    <scope>NUCLEOTIDE SEQUENCE [LARGE SCALE GENOMIC DNA]</scope>
    <source>
        <strain>cv. Columbia</strain>
    </source>
</reference>
<reference key="3">
    <citation type="journal article" date="2017" name="Plant J.">
        <title>Araport11: a complete reannotation of the Arabidopsis thaliana reference genome.</title>
        <authorList>
            <person name="Cheng C.Y."/>
            <person name="Krishnakumar V."/>
            <person name="Chan A.P."/>
            <person name="Thibaud-Nissen F."/>
            <person name="Schobel S."/>
            <person name="Town C.D."/>
        </authorList>
    </citation>
    <scope>GENOME REANNOTATION</scope>
    <source>
        <strain>cv. Columbia</strain>
    </source>
</reference>
<reference key="4">
    <citation type="journal article" date="2003" name="Science">
        <title>Empirical analysis of transcriptional activity in the Arabidopsis genome.</title>
        <authorList>
            <person name="Yamada K."/>
            <person name="Lim J."/>
            <person name="Dale J.M."/>
            <person name="Chen H."/>
            <person name="Shinn P."/>
            <person name="Palm C.J."/>
            <person name="Southwick A.M."/>
            <person name="Wu H.C."/>
            <person name="Kim C.J."/>
            <person name="Nguyen M."/>
            <person name="Pham P.K."/>
            <person name="Cheuk R.F."/>
            <person name="Karlin-Newmann G."/>
            <person name="Liu S.X."/>
            <person name="Lam B."/>
            <person name="Sakano H."/>
            <person name="Wu T."/>
            <person name="Yu G."/>
            <person name="Miranda M."/>
            <person name="Quach H.L."/>
            <person name="Tripp M."/>
            <person name="Chang C.H."/>
            <person name="Lee J.M."/>
            <person name="Toriumi M.J."/>
            <person name="Chan M.M."/>
            <person name="Tang C.C."/>
            <person name="Onodera C.S."/>
            <person name="Deng J.M."/>
            <person name="Akiyama K."/>
            <person name="Ansari Y."/>
            <person name="Arakawa T."/>
            <person name="Banh J."/>
            <person name="Banno F."/>
            <person name="Bowser L."/>
            <person name="Brooks S.Y."/>
            <person name="Carninci P."/>
            <person name="Chao Q."/>
            <person name="Choy N."/>
            <person name="Enju A."/>
            <person name="Goldsmith A.D."/>
            <person name="Gurjal M."/>
            <person name="Hansen N.F."/>
            <person name="Hayashizaki Y."/>
            <person name="Johnson-Hopson C."/>
            <person name="Hsuan V.W."/>
            <person name="Iida K."/>
            <person name="Karnes M."/>
            <person name="Khan S."/>
            <person name="Koesema E."/>
            <person name="Ishida J."/>
            <person name="Jiang P.X."/>
            <person name="Jones T."/>
            <person name="Kawai J."/>
            <person name="Kamiya A."/>
            <person name="Meyers C."/>
            <person name="Nakajima M."/>
            <person name="Narusaka M."/>
            <person name="Seki M."/>
            <person name="Sakurai T."/>
            <person name="Satou M."/>
            <person name="Tamse R."/>
            <person name="Vaysberg M."/>
            <person name="Wallender E.K."/>
            <person name="Wong C."/>
            <person name="Yamamura Y."/>
            <person name="Yuan S."/>
            <person name="Shinozaki K."/>
            <person name="Davis R.W."/>
            <person name="Theologis A."/>
            <person name="Ecker J.R."/>
        </authorList>
    </citation>
    <scope>NUCLEOTIDE SEQUENCE [LARGE SCALE MRNA] (ISOFORM 2)</scope>
    <source>
        <strain>cv. Columbia</strain>
    </source>
</reference>
<reference key="5">
    <citation type="journal article" date="2010" name="Plant J.">
        <title>A mitochondrial rRNA dimethyladenosine methyltransferase in Arabidopsis.</title>
        <authorList>
            <person name="Richter U."/>
            <person name="Kuhn K."/>
            <person name="Okada S."/>
            <person name="Brennicke A."/>
            <person name="Weihe A."/>
            <person name="Borner T."/>
        </authorList>
    </citation>
    <scope>FUNCTION</scope>
    <scope>CATALYTIC ACTIVITY</scope>
    <scope>SUBCELLULAR LOCATION</scope>
    <scope>DISRUPTION PHENOTYPE</scope>
    <source>
        <strain>cv. Columbia</strain>
    </source>
</reference>
<comment type="function">
    <text evidence="3">N6-adenine methyltransferase which modifies the AA dinucleotide at the plant mitochondrial 18S rRNA nucleotides A1914 and A1915. Not active as mitochondrial transcription factor.</text>
</comment>
<comment type="catalytic activity">
    <reaction evidence="3">
        <text>adenosine(1914)/adenosine(1915) in 18S rRNA + 4 S-adenosyl-L-methionine = N(6)-dimethyladenosine(1914)/N(6)-dimethyladenosine(1915) in 18S rRNA + 4 S-adenosyl-L-homocysteine + 4 H(+)</text>
        <dbReference type="Rhea" id="RHEA:47644"/>
        <dbReference type="Rhea" id="RHEA-COMP:11868"/>
        <dbReference type="Rhea" id="RHEA-COMP:11869"/>
        <dbReference type="ChEBI" id="CHEBI:15378"/>
        <dbReference type="ChEBI" id="CHEBI:57856"/>
        <dbReference type="ChEBI" id="CHEBI:59789"/>
        <dbReference type="ChEBI" id="CHEBI:74411"/>
        <dbReference type="ChEBI" id="CHEBI:74493"/>
    </reaction>
</comment>
<comment type="subcellular location">
    <subcellularLocation>
        <location evidence="3">Mitochondrion</location>
    </subcellularLocation>
</comment>
<comment type="alternative products">
    <event type="alternative splicing"/>
    <isoform>
        <id>Q9FK02-1</id>
        <name>1</name>
        <sequence type="displayed"/>
    </isoform>
    <isoform>
        <id>Q9FK02-2</id>
        <name>2</name>
        <sequence type="described" ref="VSP_057696"/>
    </isoform>
</comment>
<comment type="disruption phenotype">
    <text evidence="3">No visible phenotype when grown under normal conditions or under cold stress, but lack of methylation of the adenosine dinucleotide present in the mitochondrial 18S rRNA.</text>
</comment>
<comment type="similarity">
    <text evidence="5">Belongs to the class I-like SAM-binding methyltransferase superfamily. rRNA adenine N(6)-methyltransferase family.</text>
</comment>
<gene>
    <name evidence="4" type="primary">DIM1B</name>
    <name evidence="6" type="ordered locus">At5g66360</name>
    <name evidence="7" type="ORF">K1L20.14</name>
</gene>